<gene>
    <name evidence="1" type="primary">serS</name>
    <name type="ordered locus">SynWH7803_1905</name>
</gene>
<sequence>MLDQRLVRENPELMARELARRGLTVDLNSLQALAQQQRDLEEQRSSLQAEGNRVGKEVGLKIKAGADPKGSDVAELRQQGNAIKQKVAVLEDEERQLAAELKTQLLTFPNLPSPACPDGRDENDNIEVRSWGDPRRQEGLDEHWAIADRLGLLDSERSVRIAQSRFVTLFGQGARLERALINFMLDLHTGKGYREVLPPVLVNSASLTGSGQLPKFAEESFRCADDDLWLTPTAEVPLTSLHRDEIIPLDQLPLRYVAYSPCFRREAGSYGRDTRGLIRLHQFNKVELYWFVHPDHADEAHAAITADAEAVLQALELPYRVLELCTGDLGFSAARTYDLEVWLAGAGAYREISSCSVCGDFQARRSSIRTKDGKTTRLVHTLNGSGLAIGRTMAALLENGQQADGSVLLPQALVPYFGSDRLQPE</sequence>
<proteinExistence type="inferred from homology"/>
<dbReference type="EC" id="6.1.1.11" evidence="1"/>
<dbReference type="EMBL" id="CT971583">
    <property type="protein sequence ID" value="CAK24331.1"/>
    <property type="molecule type" value="Genomic_DNA"/>
</dbReference>
<dbReference type="SMR" id="A5GN16"/>
<dbReference type="STRING" id="32051.SynWH7803_1905"/>
<dbReference type="KEGG" id="syx:SynWH7803_1905"/>
<dbReference type="eggNOG" id="COG0172">
    <property type="taxonomic scope" value="Bacteria"/>
</dbReference>
<dbReference type="HOGENOM" id="CLU_023797_1_1_3"/>
<dbReference type="OrthoDB" id="9804647at2"/>
<dbReference type="UniPathway" id="UPA00906">
    <property type="reaction ID" value="UER00895"/>
</dbReference>
<dbReference type="Proteomes" id="UP000001566">
    <property type="component" value="Chromosome"/>
</dbReference>
<dbReference type="GO" id="GO:0005737">
    <property type="term" value="C:cytoplasm"/>
    <property type="evidence" value="ECO:0007669"/>
    <property type="project" value="UniProtKB-SubCell"/>
</dbReference>
<dbReference type="GO" id="GO:0005524">
    <property type="term" value="F:ATP binding"/>
    <property type="evidence" value="ECO:0007669"/>
    <property type="project" value="UniProtKB-UniRule"/>
</dbReference>
<dbReference type="GO" id="GO:0004828">
    <property type="term" value="F:serine-tRNA ligase activity"/>
    <property type="evidence" value="ECO:0007669"/>
    <property type="project" value="UniProtKB-UniRule"/>
</dbReference>
<dbReference type="GO" id="GO:0016260">
    <property type="term" value="P:selenocysteine biosynthetic process"/>
    <property type="evidence" value="ECO:0007669"/>
    <property type="project" value="UniProtKB-UniRule"/>
</dbReference>
<dbReference type="GO" id="GO:0006434">
    <property type="term" value="P:seryl-tRNA aminoacylation"/>
    <property type="evidence" value="ECO:0007669"/>
    <property type="project" value="UniProtKB-UniRule"/>
</dbReference>
<dbReference type="CDD" id="cd00770">
    <property type="entry name" value="SerRS_core"/>
    <property type="match status" value="1"/>
</dbReference>
<dbReference type="Gene3D" id="3.30.930.10">
    <property type="entry name" value="Bira Bifunctional Protein, Domain 2"/>
    <property type="match status" value="1"/>
</dbReference>
<dbReference type="Gene3D" id="1.10.287.40">
    <property type="entry name" value="Serine-tRNA synthetase, tRNA binding domain"/>
    <property type="match status" value="1"/>
</dbReference>
<dbReference type="HAMAP" id="MF_00176">
    <property type="entry name" value="Ser_tRNA_synth_type1"/>
    <property type="match status" value="1"/>
</dbReference>
<dbReference type="InterPro" id="IPR002314">
    <property type="entry name" value="aa-tRNA-synt_IIb"/>
</dbReference>
<dbReference type="InterPro" id="IPR006195">
    <property type="entry name" value="aa-tRNA-synth_II"/>
</dbReference>
<dbReference type="InterPro" id="IPR045864">
    <property type="entry name" value="aa-tRNA-synth_II/BPL/LPL"/>
</dbReference>
<dbReference type="InterPro" id="IPR002317">
    <property type="entry name" value="Ser-tRNA-ligase_type_1"/>
</dbReference>
<dbReference type="InterPro" id="IPR015866">
    <property type="entry name" value="Ser-tRNA-synth_1_N"/>
</dbReference>
<dbReference type="InterPro" id="IPR042103">
    <property type="entry name" value="SerRS_1_N_sf"/>
</dbReference>
<dbReference type="InterPro" id="IPR033729">
    <property type="entry name" value="SerRS_core"/>
</dbReference>
<dbReference type="InterPro" id="IPR010978">
    <property type="entry name" value="tRNA-bd_arm"/>
</dbReference>
<dbReference type="NCBIfam" id="TIGR00414">
    <property type="entry name" value="serS"/>
    <property type="match status" value="1"/>
</dbReference>
<dbReference type="PANTHER" id="PTHR43697:SF1">
    <property type="entry name" value="SERINE--TRNA LIGASE"/>
    <property type="match status" value="1"/>
</dbReference>
<dbReference type="PANTHER" id="PTHR43697">
    <property type="entry name" value="SERYL-TRNA SYNTHETASE"/>
    <property type="match status" value="1"/>
</dbReference>
<dbReference type="Pfam" id="PF02403">
    <property type="entry name" value="Seryl_tRNA_N"/>
    <property type="match status" value="1"/>
</dbReference>
<dbReference type="Pfam" id="PF00587">
    <property type="entry name" value="tRNA-synt_2b"/>
    <property type="match status" value="1"/>
</dbReference>
<dbReference type="PIRSF" id="PIRSF001529">
    <property type="entry name" value="Ser-tRNA-synth_IIa"/>
    <property type="match status" value="1"/>
</dbReference>
<dbReference type="PRINTS" id="PR00981">
    <property type="entry name" value="TRNASYNTHSER"/>
</dbReference>
<dbReference type="SUPFAM" id="SSF55681">
    <property type="entry name" value="Class II aaRS and biotin synthetases"/>
    <property type="match status" value="1"/>
</dbReference>
<dbReference type="SUPFAM" id="SSF46589">
    <property type="entry name" value="tRNA-binding arm"/>
    <property type="match status" value="1"/>
</dbReference>
<dbReference type="PROSITE" id="PS50862">
    <property type="entry name" value="AA_TRNA_LIGASE_II"/>
    <property type="match status" value="1"/>
</dbReference>
<evidence type="ECO:0000255" key="1">
    <source>
        <dbReference type="HAMAP-Rule" id="MF_00176"/>
    </source>
</evidence>
<keyword id="KW-0030">Aminoacyl-tRNA synthetase</keyword>
<keyword id="KW-0067">ATP-binding</keyword>
<keyword id="KW-0963">Cytoplasm</keyword>
<keyword id="KW-0436">Ligase</keyword>
<keyword id="KW-0547">Nucleotide-binding</keyword>
<keyword id="KW-0648">Protein biosynthesis</keyword>
<keyword id="KW-1185">Reference proteome</keyword>
<comment type="function">
    <text evidence="1">Catalyzes the attachment of serine to tRNA(Ser). Is also able to aminoacylate tRNA(Sec) with serine, to form the misacylated tRNA L-seryl-tRNA(Sec), which will be further converted into selenocysteinyl-tRNA(Sec).</text>
</comment>
<comment type="catalytic activity">
    <reaction evidence="1">
        <text>tRNA(Ser) + L-serine + ATP = L-seryl-tRNA(Ser) + AMP + diphosphate + H(+)</text>
        <dbReference type="Rhea" id="RHEA:12292"/>
        <dbReference type="Rhea" id="RHEA-COMP:9669"/>
        <dbReference type="Rhea" id="RHEA-COMP:9703"/>
        <dbReference type="ChEBI" id="CHEBI:15378"/>
        <dbReference type="ChEBI" id="CHEBI:30616"/>
        <dbReference type="ChEBI" id="CHEBI:33019"/>
        <dbReference type="ChEBI" id="CHEBI:33384"/>
        <dbReference type="ChEBI" id="CHEBI:78442"/>
        <dbReference type="ChEBI" id="CHEBI:78533"/>
        <dbReference type="ChEBI" id="CHEBI:456215"/>
        <dbReference type="EC" id="6.1.1.11"/>
    </reaction>
</comment>
<comment type="catalytic activity">
    <reaction evidence="1">
        <text>tRNA(Sec) + L-serine + ATP = L-seryl-tRNA(Sec) + AMP + diphosphate + H(+)</text>
        <dbReference type="Rhea" id="RHEA:42580"/>
        <dbReference type="Rhea" id="RHEA-COMP:9742"/>
        <dbReference type="Rhea" id="RHEA-COMP:10128"/>
        <dbReference type="ChEBI" id="CHEBI:15378"/>
        <dbReference type="ChEBI" id="CHEBI:30616"/>
        <dbReference type="ChEBI" id="CHEBI:33019"/>
        <dbReference type="ChEBI" id="CHEBI:33384"/>
        <dbReference type="ChEBI" id="CHEBI:78442"/>
        <dbReference type="ChEBI" id="CHEBI:78533"/>
        <dbReference type="ChEBI" id="CHEBI:456215"/>
        <dbReference type="EC" id="6.1.1.11"/>
    </reaction>
</comment>
<comment type="pathway">
    <text evidence="1">Aminoacyl-tRNA biosynthesis; selenocysteinyl-tRNA(Sec) biosynthesis; L-seryl-tRNA(Sec) from L-serine and tRNA(Sec): step 1/1.</text>
</comment>
<comment type="subunit">
    <text evidence="1">Homodimer. The tRNA molecule binds across the dimer.</text>
</comment>
<comment type="subcellular location">
    <subcellularLocation>
        <location evidence="1">Cytoplasm</location>
    </subcellularLocation>
</comment>
<comment type="domain">
    <text evidence="1">Consists of two distinct domains, a catalytic core and a N-terminal extension that is involved in tRNA binding.</text>
</comment>
<comment type="similarity">
    <text evidence="1">Belongs to the class-II aminoacyl-tRNA synthetase family. Type-1 seryl-tRNA synthetase subfamily.</text>
</comment>
<reference key="1">
    <citation type="submission" date="2006-05" db="EMBL/GenBank/DDBJ databases">
        <authorList>
            <consortium name="Genoscope"/>
        </authorList>
    </citation>
    <scope>NUCLEOTIDE SEQUENCE [LARGE SCALE GENOMIC DNA]</scope>
    <source>
        <strain>WH7803</strain>
    </source>
</reference>
<accession>A5GN16</accession>
<name>SYS_SYNPW</name>
<feature type="chain" id="PRO_1000019849" description="Serine--tRNA ligase">
    <location>
        <begin position="1"/>
        <end position="425"/>
    </location>
</feature>
<feature type="binding site" evidence="1">
    <location>
        <begin position="233"/>
        <end position="235"/>
    </location>
    <ligand>
        <name>L-serine</name>
        <dbReference type="ChEBI" id="CHEBI:33384"/>
    </ligand>
</feature>
<feature type="binding site" evidence="1">
    <location>
        <begin position="264"/>
        <end position="266"/>
    </location>
    <ligand>
        <name>ATP</name>
        <dbReference type="ChEBI" id="CHEBI:30616"/>
    </ligand>
</feature>
<feature type="binding site" evidence="1">
    <location>
        <position position="287"/>
    </location>
    <ligand>
        <name>L-serine</name>
        <dbReference type="ChEBI" id="CHEBI:33384"/>
    </ligand>
</feature>
<feature type="binding site" evidence="1">
    <location>
        <begin position="351"/>
        <end position="354"/>
    </location>
    <ligand>
        <name>ATP</name>
        <dbReference type="ChEBI" id="CHEBI:30616"/>
    </ligand>
</feature>
<feature type="binding site" evidence="1">
    <location>
        <position position="385"/>
    </location>
    <ligand>
        <name>L-serine</name>
        <dbReference type="ChEBI" id="CHEBI:33384"/>
    </ligand>
</feature>
<protein>
    <recommendedName>
        <fullName evidence="1">Serine--tRNA ligase</fullName>
        <ecNumber evidence="1">6.1.1.11</ecNumber>
    </recommendedName>
    <alternativeName>
        <fullName evidence="1">Seryl-tRNA synthetase</fullName>
        <shortName evidence="1">SerRS</shortName>
    </alternativeName>
    <alternativeName>
        <fullName evidence="1">Seryl-tRNA(Ser/Sec) synthetase</fullName>
    </alternativeName>
</protein>
<organism>
    <name type="scientific">Synechococcus sp. (strain WH7803)</name>
    <dbReference type="NCBI Taxonomy" id="32051"/>
    <lineage>
        <taxon>Bacteria</taxon>
        <taxon>Bacillati</taxon>
        <taxon>Cyanobacteriota</taxon>
        <taxon>Cyanophyceae</taxon>
        <taxon>Synechococcales</taxon>
        <taxon>Synechococcaceae</taxon>
        <taxon>Synechococcus</taxon>
    </lineage>
</organism>